<gene>
    <name evidence="1" type="primary">guaA</name>
    <name type="ordered locus">ECIAI1_2559</name>
</gene>
<reference key="1">
    <citation type="journal article" date="2009" name="PLoS Genet.">
        <title>Organised genome dynamics in the Escherichia coli species results in highly diverse adaptive paths.</title>
        <authorList>
            <person name="Touchon M."/>
            <person name="Hoede C."/>
            <person name="Tenaillon O."/>
            <person name="Barbe V."/>
            <person name="Baeriswyl S."/>
            <person name="Bidet P."/>
            <person name="Bingen E."/>
            <person name="Bonacorsi S."/>
            <person name="Bouchier C."/>
            <person name="Bouvet O."/>
            <person name="Calteau A."/>
            <person name="Chiapello H."/>
            <person name="Clermont O."/>
            <person name="Cruveiller S."/>
            <person name="Danchin A."/>
            <person name="Diard M."/>
            <person name="Dossat C."/>
            <person name="Karoui M.E."/>
            <person name="Frapy E."/>
            <person name="Garry L."/>
            <person name="Ghigo J.M."/>
            <person name="Gilles A.M."/>
            <person name="Johnson J."/>
            <person name="Le Bouguenec C."/>
            <person name="Lescat M."/>
            <person name="Mangenot S."/>
            <person name="Martinez-Jehanne V."/>
            <person name="Matic I."/>
            <person name="Nassif X."/>
            <person name="Oztas S."/>
            <person name="Petit M.A."/>
            <person name="Pichon C."/>
            <person name="Rouy Z."/>
            <person name="Ruf C.S."/>
            <person name="Schneider D."/>
            <person name="Tourret J."/>
            <person name="Vacherie B."/>
            <person name="Vallenet D."/>
            <person name="Medigue C."/>
            <person name="Rocha E.P.C."/>
            <person name="Denamur E."/>
        </authorList>
    </citation>
    <scope>NUCLEOTIDE SEQUENCE [LARGE SCALE GENOMIC DNA]</scope>
    <source>
        <strain>IAI1</strain>
    </source>
</reference>
<organism>
    <name type="scientific">Escherichia coli O8 (strain IAI1)</name>
    <dbReference type="NCBI Taxonomy" id="585034"/>
    <lineage>
        <taxon>Bacteria</taxon>
        <taxon>Pseudomonadati</taxon>
        <taxon>Pseudomonadota</taxon>
        <taxon>Gammaproteobacteria</taxon>
        <taxon>Enterobacterales</taxon>
        <taxon>Enterobacteriaceae</taxon>
        <taxon>Escherichia</taxon>
    </lineage>
</organism>
<protein>
    <recommendedName>
        <fullName evidence="1">GMP synthase [glutamine-hydrolyzing]</fullName>
        <ecNumber evidence="1">6.3.5.2</ecNumber>
    </recommendedName>
    <alternativeName>
        <fullName evidence="1">GMP synthetase</fullName>
    </alternativeName>
    <alternativeName>
        <fullName evidence="1">Glutamine amidotransferase</fullName>
    </alternativeName>
</protein>
<feature type="chain" id="PRO_1000120282" description="GMP synthase [glutamine-hydrolyzing]">
    <location>
        <begin position="1"/>
        <end position="525"/>
    </location>
</feature>
<feature type="domain" description="Glutamine amidotransferase type-1" evidence="1">
    <location>
        <begin position="9"/>
        <end position="207"/>
    </location>
</feature>
<feature type="domain" description="GMPS ATP-PPase" evidence="1">
    <location>
        <begin position="208"/>
        <end position="400"/>
    </location>
</feature>
<feature type="active site" description="Nucleophile" evidence="1">
    <location>
        <position position="86"/>
    </location>
</feature>
<feature type="active site" evidence="1">
    <location>
        <position position="181"/>
    </location>
</feature>
<feature type="active site" evidence="1">
    <location>
        <position position="183"/>
    </location>
</feature>
<feature type="binding site" evidence="1">
    <location>
        <begin position="235"/>
        <end position="241"/>
    </location>
    <ligand>
        <name>ATP</name>
        <dbReference type="ChEBI" id="CHEBI:30616"/>
    </ligand>
</feature>
<proteinExistence type="inferred from homology"/>
<evidence type="ECO:0000255" key="1">
    <source>
        <dbReference type="HAMAP-Rule" id="MF_00344"/>
    </source>
</evidence>
<comment type="function">
    <text evidence="1">Catalyzes the synthesis of GMP from XMP.</text>
</comment>
<comment type="catalytic activity">
    <reaction evidence="1">
        <text>XMP + L-glutamine + ATP + H2O = GMP + L-glutamate + AMP + diphosphate + 2 H(+)</text>
        <dbReference type="Rhea" id="RHEA:11680"/>
        <dbReference type="ChEBI" id="CHEBI:15377"/>
        <dbReference type="ChEBI" id="CHEBI:15378"/>
        <dbReference type="ChEBI" id="CHEBI:29985"/>
        <dbReference type="ChEBI" id="CHEBI:30616"/>
        <dbReference type="ChEBI" id="CHEBI:33019"/>
        <dbReference type="ChEBI" id="CHEBI:57464"/>
        <dbReference type="ChEBI" id="CHEBI:58115"/>
        <dbReference type="ChEBI" id="CHEBI:58359"/>
        <dbReference type="ChEBI" id="CHEBI:456215"/>
        <dbReference type="EC" id="6.3.5.2"/>
    </reaction>
</comment>
<comment type="pathway">
    <text evidence="1">Purine metabolism; GMP biosynthesis; GMP from XMP (L-Gln route): step 1/1.</text>
</comment>
<comment type="subunit">
    <text evidence="1">Homodimer.</text>
</comment>
<keyword id="KW-0067">ATP-binding</keyword>
<keyword id="KW-0315">Glutamine amidotransferase</keyword>
<keyword id="KW-0332">GMP biosynthesis</keyword>
<keyword id="KW-0436">Ligase</keyword>
<keyword id="KW-0547">Nucleotide-binding</keyword>
<keyword id="KW-0658">Purine biosynthesis</keyword>
<name>GUAA_ECO8A</name>
<dbReference type="EC" id="6.3.5.2" evidence="1"/>
<dbReference type="EMBL" id="CU928160">
    <property type="protein sequence ID" value="CAQ99399.1"/>
    <property type="molecule type" value="Genomic_DNA"/>
</dbReference>
<dbReference type="RefSeq" id="WP_000138282.1">
    <property type="nucleotide sequence ID" value="NC_011741.1"/>
</dbReference>
<dbReference type="SMR" id="B7M7L1"/>
<dbReference type="MEROPS" id="C26.957"/>
<dbReference type="GeneID" id="75172615"/>
<dbReference type="KEGG" id="ecr:ECIAI1_2559"/>
<dbReference type="HOGENOM" id="CLU_014340_0_5_6"/>
<dbReference type="UniPathway" id="UPA00189">
    <property type="reaction ID" value="UER00296"/>
</dbReference>
<dbReference type="GO" id="GO:0005829">
    <property type="term" value="C:cytosol"/>
    <property type="evidence" value="ECO:0007669"/>
    <property type="project" value="TreeGrafter"/>
</dbReference>
<dbReference type="GO" id="GO:0005524">
    <property type="term" value="F:ATP binding"/>
    <property type="evidence" value="ECO:0007669"/>
    <property type="project" value="UniProtKB-UniRule"/>
</dbReference>
<dbReference type="GO" id="GO:0003921">
    <property type="term" value="F:GMP synthase activity"/>
    <property type="evidence" value="ECO:0007669"/>
    <property type="project" value="InterPro"/>
</dbReference>
<dbReference type="CDD" id="cd01742">
    <property type="entry name" value="GATase1_GMP_Synthase"/>
    <property type="match status" value="1"/>
</dbReference>
<dbReference type="CDD" id="cd01997">
    <property type="entry name" value="GMP_synthase_C"/>
    <property type="match status" value="1"/>
</dbReference>
<dbReference type="FunFam" id="3.30.300.10:FF:000002">
    <property type="entry name" value="GMP synthase [glutamine-hydrolyzing]"/>
    <property type="match status" value="1"/>
</dbReference>
<dbReference type="FunFam" id="3.40.50.620:FF:000001">
    <property type="entry name" value="GMP synthase [glutamine-hydrolyzing]"/>
    <property type="match status" value="1"/>
</dbReference>
<dbReference type="FunFam" id="3.40.50.880:FF:000001">
    <property type="entry name" value="GMP synthase [glutamine-hydrolyzing]"/>
    <property type="match status" value="1"/>
</dbReference>
<dbReference type="Gene3D" id="3.30.300.10">
    <property type="match status" value="1"/>
</dbReference>
<dbReference type="Gene3D" id="3.40.50.880">
    <property type="match status" value="1"/>
</dbReference>
<dbReference type="Gene3D" id="3.40.50.620">
    <property type="entry name" value="HUPs"/>
    <property type="match status" value="1"/>
</dbReference>
<dbReference type="HAMAP" id="MF_00344">
    <property type="entry name" value="GMP_synthase"/>
    <property type="match status" value="1"/>
</dbReference>
<dbReference type="InterPro" id="IPR029062">
    <property type="entry name" value="Class_I_gatase-like"/>
</dbReference>
<dbReference type="InterPro" id="IPR017926">
    <property type="entry name" value="GATASE"/>
</dbReference>
<dbReference type="InterPro" id="IPR001674">
    <property type="entry name" value="GMP_synth_C"/>
</dbReference>
<dbReference type="InterPro" id="IPR004739">
    <property type="entry name" value="GMP_synth_GATase"/>
</dbReference>
<dbReference type="InterPro" id="IPR022955">
    <property type="entry name" value="GMP_synthase"/>
</dbReference>
<dbReference type="InterPro" id="IPR025777">
    <property type="entry name" value="GMPS_ATP_PPase_dom"/>
</dbReference>
<dbReference type="InterPro" id="IPR022310">
    <property type="entry name" value="NAD/GMP_synthase"/>
</dbReference>
<dbReference type="InterPro" id="IPR014729">
    <property type="entry name" value="Rossmann-like_a/b/a_fold"/>
</dbReference>
<dbReference type="NCBIfam" id="TIGR00884">
    <property type="entry name" value="guaA_Cterm"/>
    <property type="match status" value="1"/>
</dbReference>
<dbReference type="NCBIfam" id="TIGR00888">
    <property type="entry name" value="guaA_Nterm"/>
    <property type="match status" value="1"/>
</dbReference>
<dbReference type="NCBIfam" id="NF000848">
    <property type="entry name" value="PRK00074.1"/>
    <property type="match status" value="1"/>
</dbReference>
<dbReference type="PANTHER" id="PTHR11922:SF2">
    <property type="entry name" value="GMP SYNTHASE [GLUTAMINE-HYDROLYZING]"/>
    <property type="match status" value="1"/>
</dbReference>
<dbReference type="PANTHER" id="PTHR11922">
    <property type="entry name" value="GMP SYNTHASE-RELATED"/>
    <property type="match status" value="1"/>
</dbReference>
<dbReference type="Pfam" id="PF00117">
    <property type="entry name" value="GATase"/>
    <property type="match status" value="1"/>
</dbReference>
<dbReference type="Pfam" id="PF00958">
    <property type="entry name" value="GMP_synt_C"/>
    <property type="match status" value="1"/>
</dbReference>
<dbReference type="Pfam" id="PF02540">
    <property type="entry name" value="NAD_synthase"/>
    <property type="match status" value="1"/>
</dbReference>
<dbReference type="PRINTS" id="PR00097">
    <property type="entry name" value="ANTSNTHASEII"/>
</dbReference>
<dbReference type="PRINTS" id="PR00099">
    <property type="entry name" value="CPSGATASE"/>
</dbReference>
<dbReference type="PRINTS" id="PR00096">
    <property type="entry name" value="GATASE"/>
</dbReference>
<dbReference type="SUPFAM" id="SSF52402">
    <property type="entry name" value="Adenine nucleotide alpha hydrolases-like"/>
    <property type="match status" value="1"/>
</dbReference>
<dbReference type="SUPFAM" id="SSF52317">
    <property type="entry name" value="Class I glutamine amidotransferase-like"/>
    <property type="match status" value="1"/>
</dbReference>
<dbReference type="SUPFAM" id="SSF54810">
    <property type="entry name" value="GMP synthetase C-terminal dimerisation domain"/>
    <property type="match status" value="1"/>
</dbReference>
<dbReference type="PROSITE" id="PS51273">
    <property type="entry name" value="GATASE_TYPE_1"/>
    <property type="match status" value="1"/>
</dbReference>
<dbReference type="PROSITE" id="PS51553">
    <property type="entry name" value="GMPS_ATP_PPASE"/>
    <property type="match status" value="1"/>
</dbReference>
<accession>B7M7L1</accession>
<sequence length="525" mass="58665">MTENIHKHRILILDFGSQYTQLVARRVRELGVYCELWAWDVTEAQIRDFNPSGIILSGGPESTTEENSPRAPQYVFEAGVPVFGVCYGMQTMAMQLGGHVEASNEREFGYAQVEVVNDSALVRGIEDALTADGKPLLDVWMSHGDKVTAIPSDFVTVASTESCPFAIMANEEKRFYGVQFHPEVTHTRQGMRMLERFVRDICQCEALWTPAKIIDDAVARIREQVGDDKVILGLSGGVDSSVTAMLLHRAIGKNLTCVFVDNGLLRLNEAEQVLDMFGDHFGLNIVHVPAEDRFLSALAGENDPEAKRKIIGRVFVEVFDEEALKLEDVKWLAQGTIYPDVIESAASATGKAHVIKSHHNVGGLPKEMKMGLVEPLKELFKDEVRKIGLELGLPYDMLYRHPFPGPGLGVRVLGEVKKEYCDLLRRADAIFIEELRKADLYDKVSQAFTVFLPVRSVGVMGDGRKYDWVVSLRAVETIDFMTAHWAHLPYDFLGRVSNRIINEVNGISRVVYDISGKPPATIEWE</sequence>